<proteinExistence type="inferred from homology"/>
<evidence type="ECO:0000255" key="1">
    <source>
        <dbReference type="HAMAP-Rule" id="MF_01451"/>
    </source>
</evidence>
<name>ADDA_STAA8</name>
<feature type="chain" id="PRO_0000379317" description="ATP-dependent helicase/nuclease subunit A">
    <location>
        <begin position="1"/>
        <end position="1217"/>
    </location>
</feature>
<feature type="domain" description="UvrD-like helicase ATP-binding" evidence="1">
    <location>
        <begin position="10"/>
        <end position="475"/>
    </location>
</feature>
<feature type="domain" description="UvrD-like helicase C-terminal" evidence="1">
    <location>
        <begin position="476"/>
        <end position="786"/>
    </location>
</feature>
<feature type="binding site" evidence="1">
    <location>
        <begin position="31"/>
        <end position="38"/>
    </location>
    <ligand>
        <name>ATP</name>
        <dbReference type="ChEBI" id="CHEBI:30616"/>
    </ligand>
</feature>
<dbReference type="EC" id="3.1.-.-" evidence="1"/>
<dbReference type="EC" id="5.6.2.4" evidence="1"/>
<dbReference type="EMBL" id="CP000253">
    <property type="protein sequence ID" value="ABD30030.1"/>
    <property type="molecule type" value="Genomic_DNA"/>
</dbReference>
<dbReference type="RefSeq" id="WP_000154930.1">
    <property type="nucleotide sequence ID" value="NZ_LS483365.1"/>
</dbReference>
<dbReference type="RefSeq" id="YP_499458.1">
    <property type="nucleotide sequence ID" value="NC_007795.1"/>
</dbReference>
<dbReference type="SMR" id="Q2FZT5"/>
<dbReference type="STRING" id="93061.SAOUHSC_00905"/>
<dbReference type="PaxDb" id="1280-SAXN108_0962"/>
<dbReference type="GeneID" id="3921751"/>
<dbReference type="KEGG" id="sao:SAOUHSC_00905"/>
<dbReference type="PATRIC" id="fig|93061.5.peg.826"/>
<dbReference type="eggNOG" id="COG1074">
    <property type="taxonomic scope" value="Bacteria"/>
</dbReference>
<dbReference type="HOGENOM" id="CLU_001114_3_1_9"/>
<dbReference type="OrthoDB" id="9810135at2"/>
<dbReference type="PRO" id="PR:Q2FZT5"/>
<dbReference type="Proteomes" id="UP000008816">
    <property type="component" value="Chromosome"/>
</dbReference>
<dbReference type="GO" id="GO:0005829">
    <property type="term" value="C:cytosol"/>
    <property type="evidence" value="ECO:0000318"/>
    <property type="project" value="GO_Central"/>
</dbReference>
<dbReference type="GO" id="GO:0033202">
    <property type="term" value="C:DNA helicase complex"/>
    <property type="evidence" value="ECO:0000318"/>
    <property type="project" value="GO_Central"/>
</dbReference>
<dbReference type="GO" id="GO:0043138">
    <property type="term" value="F:3'-5' DNA helicase activity"/>
    <property type="evidence" value="ECO:0000318"/>
    <property type="project" value="GO_Central"/>
</dbReference>
<dbReference type="GO" id="GO:0008408">
    <property type="term" value="F:3'-5' exonuclease activity"/>
    <property type="evidence" value="ECO:0007669"/>
    <property type="project" value="UniProtKB-UniRule"/>
</dbReference>
<dbReference type="GO" id="GO:0005524">
    <property type="term" value="F:ATP binding"/>
    <property type="evidence" value="ECO:0007669"/>
    <property type="project" value="UniProtKB-UniRule"/>
</dbReference>
<dbReference type="GO" id="GO:0016887">
    <property type="term" value="F:ATP hydrolysis activity"/>
    <property type="evidence" value="ECO:0007669"/>
    <property type="project" value="RHEA"/>
</dbReference>
<dbReference type="GO" id="GO:0003690">
    <property type="term" value="F:double-stranded DNA binding"/>
    <property type="evidence" value="ECO:0007669"/>
    <property type="project" value="UniProtKB-UniRule"/>
</dbReference>
<dbReference type="GO" id="GO:0000724">
    <property type="term" value="P:double-strand break repair via homologous recombination"/>
    <property type="evidence" value="ECO:0007669"/>
    <property type="project" value="UniProtKB-UniRule"/>
</dbReference>
<dbReference type="GO" id="GO:0000725">
    <property type="term" value="P:recombinational repair"/>
    <property type="evidence" value="ECO:0000318"/>
    <property type="project" value="GO_Central"/>
</dbReference>
<dbReference type="CDD" id="cd17932">
    <property type="entry name" value="DEXQc_UvrD"/>
    <property type="match status" value="2"/>
</dbReference>
<dbReference type="FunFam" id="3.40.50.300:FF:001196">
    <property type="entry name" value="ATP-dependent helicase/nuclease subunit A"/>
    <property type="match status" value="1"/>
</dbReference>
<dbReference type="FunFam" id="3.40.50.300:FF:001715">
    <property type="entry name" value="ATP-dependent helicase/nuclease subunit A"/>
    <property type="match status" value="1"/>
</dbReference>
<dbReference type="Gene3D" id="3.90.320.10">
    <property type="match status" value="1"/>
</dbReference>
<dbReference type="Gene3D" id="3.40.50.300">
    <property type="entry name" value="P-loop containing nucleotide triphosphate hydrolases"/>
    <property type="match status" value="4"/>
</dbReference>
<dbReference type="Gene3D" id="1.10.486.10">
    <property type="entry name" value="PCRA, domain 4"/>
    <property type="match status" value="1"/>
</dbReference>
<dbReference type="HAMAP" id="MF_01451">
    <property type="entry name" value="AddA"/>
    <property type="match status" value="1"/>
</dbReference>
<dbReference type="InterPro" id="IPR014152">
    <property type="entry name" value="AddA"/>
</dbReference>
<dbReference type="InterPro" id="IPR014017">
    <property type="entry name" value="DNA_helicase_UvrD-like_C"/>
</dbReference>
<dbReference type="InterPro" id="IPR000212">
    <property type="entry name" value="DNA_helicase_UvrD/REP"/>
</dbReference>
<dbReference type="InterPro" id="IPR027417">
    <property type="entry name" value="P-loop_NTPase"/>
</dbReference>
<dbReference type="InterPro" id="IPR011604">
    <property type="entry name" value="PDDEXK-like_dom_sf"/>
</dbReference>
<dbReference type="InterPro" id="IPR038726">
    <property type="entry name" value="PDDEXK_AddAB-type"/>
</dbReference>
<dbReference type="InterPro" id="IPR011335">
    <property type="entry name" value="Restrct_endonuc-II-like"/>
</dbReference>
<dbReference type="InterPro" id="IPR014016">
    <property type="entry name" value="UvrD-like_ATP-bd"/>
</dbReference>
<dbReference type="NCBIfam" id="TIGR02785">
    <property type="entry name" value="addA_Gpos"/>
    <property type="match status" value="1"/>
</dbReference>
<dbReference type="PANTHER" id="PTHR11070:SF48">
    <property type="entry name" value="ATP-DEPENDENT HELICASE_NUCLEASE SUBUNIT A"/>
    <property type="match status" value="1"/>
</dbReference>
<dbReference type="PANTHER" id="PTHR11070">
    <property type="entry name" value="UVRD / RECB / PCRA DNA HELICASE FAMILY MEMBER"/>
    <property type="match status" value="1"/>
</dbReference>
<dbReference type="Pfam" id="PF12705">
    <property type="entry name" value="PDDEXK_1"/>
    <property type="match status" value="1"/>
</dbReference>
<dbReference type="Pfam" id="PF00580">
    <property type="entry name" value="UvrD-helicase"/>
    <property type="match status" value="1"/>
</dbReference>
<dbReference type="Pfam" id="PF13361">
    <property type="entry name" value="UvrD_C"/>
    <property type="match status" value="1"/>
</dbReference>
<dbReference type="SUPFAM" id="SSF52540">
    <property type="entry name" value="P-loop containing nucleoside triphosphate hydrolases"/>
    <property type="match status" value="1"/>
</dbReference>
<dbReference type="SUPFAM" id="SSF52980">
    <property type="entry name" value="Restriction endonuclease-like"/>
    <property type="match status" value="1"/>
</dbReference>
<dbReference type="PROSITE" id="PS51198">
    <property type="entry name" value="UVRD_HELICASE_ATP_BIND"/>
    <property type="match status" value="1"/>
</dbReference>
<dbReference type="PROSITE" id="PS51217">
    <property type="entry name" value="UVRD_HELICASE_CTER"/>
    <property type="match status" value="1"/>
</dbReference>
<accession>Q2FZT5</accession>
<gene>
    <name evidence="1" type="primary">addA</name>
    <name type="ordered locus">SAOUHSC_00905</name>
</gene>
<sequence>MTIPEKPQGVIWTDAQWQSIYATGQDVLVAAAAGSGKTAVLVERIIQKILRDGIDVDRLLVVTFTNLSAREMKHRVDQRIQEASIADPANAHLKNQRIKIHQAQISTLHSFCLKLIQQHYDVLNIDPNFRTSSEAENILLLEQTIDEVIEQHYDILDPAFIELTEQLSSDRSDDQFRMIIKQLYFFSVANPNPTNWLDQLVTPYEEEAQQAQLIQLLTDLSKVFITAAYDALNKAYDLFSMMDSVDKHLAVIEDERRLMGRVLEGGFIDIPYLTGHEFGARLPNVTAKIKEANEMMVDALEDAKLQYKKYKSLIDKVKSDYFSREADDLKADMQQLAPRVKYLARIVKDVMSEFNRKKRSKNILDFSDYEHFALQILTNEDGSPSEIAESYRQHFQEILVDEYQDTNRVQEKILSCIKTGDEHNGNLFMVGDVKQSIYKFRQADPSLFIEKYQRFTIDGDGTGRRIDLSQNFRSRKEVLSTTNYIFKHMMDEQVGEVKYDEAAQLYYGAPYDESDHPVNLKVLVEADQEHSDLTGSEQEAHFIVEQVKDILEHQKVYDMKTGSYRSATYKDIVILERSFGQARNLQQAFKNEDIPFHVNSREGYFEQTEVRLVLSFLRAIDNPLQDIYLVGLMRSVIYQFKEDELAQIRILSPNDDYFYQSIVNYINDEAADAILVDKLKMFLSDIQSYQQYSKDHPVYQLIDKFYNDHYVIQYFSGLIGGRGRRANLYGLFNKAIEFENSSFRGLYQFIRFIDELIERGKDFGEENVVGPNDNVVRMMTIHSSKGLEFPFVIYSGLSKDFNKRDLKQPVILNQQFGLGMDYFDVDKEMAFPSLASVAYRAVAEKELVSEEMRLVYVALTRAKEQLYLIGRVKNDKSLLELEQLSISGEHIAVNERLTSPNPFHLIYSILSKHQSASIPDDLKFEKDIAQIEDSSRPNVNISIVYFEDVSTETILDNDEYRSVNQLETMQNGNEDVKAQIKHQLDYRYPYVNDTKKPSKQSVSELKRQYETEESGTSYERVRQYRIGFSTYERPKFLSEQGKRKANEIGTLMHTVMQHLPFKKERISEVELHQYIDGLIDKHIIEADAKKDIRMDEIMTFINSELYSIIAEAEQVYRELPFVVNQALVDQLPQGDEDVSIIQGMIDLIFVKDGVHYFVDYKTDAFNRRRGMTDEEIGTQLKNKYKIQMKYYQNTLQTILNKEVKGYLYFFKFGTLQL</sequence>
<organism>
    <name type="scientific">Staphylococcus aureus (strain NCTC 8325 / PS 47)</name>
    <dbReference type="NCBI Taxonomy" id="93061"/>
    <lineage>
        <taxon>Bacteria</taxon>
        <taxon>Bacillati</taxon>
        <taxon>Bacillota</taxon>
        <taxon>Bacilli</taxon>
        <taxon>Bacillales</taxon>
        <taxon>Staphylococcaceae</taxon>
        <taxon>Staphylococcus</taxon>
    </lineage>
</organism>
<reference key="1">
    <citation type="book" date="2006" name="Gram positive pathogens, 2nd edition">
        <title>The Staphylococcus aureus NCTC 8325 genome.</title>
        <editorList>
            <person name="Fischetti V."/>
            <person name="Novick R."/>
            <person name="Ferretti J."/>
            <person name="Portnoy D."/>
            <person name="Rood J."/>
        </editorList>
        <authorList>
            <person name="Gillaspy A.F."/>
            <person name="Worrell V."/>
            <person name="Orvis J."/>
            <person name="Roe B.A."/>
            <person name="Dyer D.W."/>
            <person name="Iandolo J.J."/>
        </authorList>
    </citation>
    <scope>NUCLEOTIDE SEQUENCE [LARGE SCALE GENOMIC DNA]</scope>
    <source>
        <strain>NCTC 8325 / PS 47</strain>
    </source>
</reference>
<keyword id="KW-0067">ATP-binding</keyword>
<keyword id="KW-0227">DNA damage</keyword>
<keyword id="KW-0234">DNA repair</keyword>
<keyword id="KW-0238">DNA-binding</keyword>
<keyword id="KW-0269">Exonuclease</keyword>
<keyword id="KW-0347">Helicase</keyword>
<keyword id="KW-0378">Hydrolase</keyword>
<keyword id="KW-0413">Isomerase</keyword>
<keyword id="KW-0540">Nuclease</keyword>
<keyword id="KW-0547">Nucleotide-binding</keyword>
<keyword id="KW-1185">Reference proteome</keyword>
<comment type="function">
    <text evidence="1">The heterodimer acts as both an ATP-dependent DNA helicase and an ATP-dependent, dual-direction single-stranded exonuclease. Recognizes the chi site generating a DNA molecule suitable for the initiation of homologous recombination. The AddA nuclease domain is required for chi fragment generation; this subunit has the helicase and 3' -&gt; 5' nuclease activities.</text>
</comment>
<comment type="catalytic activity">
    <reaction evidence="1">
        <text>Couples ATP hydrolysis with the unwinding of duplex DNA by translocating in the 3'-5' direction.</text>
        <dbReference type="EC" id="5.6.2.4"/>
    </reaction>
</comment>
<comment type="catalytic activity">
    <reaction evidence="1">
        <text>ATP + H2O = ADP + phosphate + H(+)</text>
        <dbReference type="Rhea" id="RHEA:13065"/>
        <dbReference type="ChEBI" id="CHEBI:15377"/>
        <dbReference type="ChEBI" id="CHEBI:15378"/>
        <dbReference type="ChEBI" id="CHEBI:30616"/>
        <dbReference type="ChEBI" id="CHEBI:43474"/>
        <dbReference type="ChEBI" id="CHEBI:456216"/>
        <dbReference type="EC" id="5.6.2.4"/>
    </reaction>
</comment>
<comment type="cofactor">
    <cofactor evidence="1">
        <name>Mg(2+)</name>
        <dbReference type="ChEBI" id="CHEBI:18420"/>
    </cofactor>
</comment>
<comment type="subunit">
    <text evidence="1">Heterodimer of AddA and AddB/RexB.</text>
</comment>
<comment type="similarity">
    <text evidence="1">Belongs to the helicase family. AddA subfamily.</text>
</comment>
<protein>
    <recommendedName>
        <fullName evidence="1">ATP-dependent helicase/nuclease subunit A</fullName>
        <ecNumber evidence="1">3.1.-.-</ecNumber>
        <ecNumber evidence="1">5.6.2.4</ecNumber>
    </recommendedName>
    <alternativeName>
        <fullName evidence="1">ATP-dependent helicase/nuclease AddA</fullName>
    </alternativeName>
    <alternativeName>
        <fullName evidence="1">DNA 3'-5' helicase AddA</fullName>
    </alternativeName>
</protein>